<name>RIBL_METTM</name>
<keyword id="KW-0067">ATP-binding</keyword>
<keyword id="KW-0274">FAD</keyword>
<keyword id="KW-0285">Flavoprotein</keyword>
<keyword id="KW-0288">FMN</keyword>
<keyword id="KW-0547">Nucleotide-binding</keyword>
<keyword id="KW-0548">Nucleotidyltransferase</keyword>
<keyword id="KW-0808">Transferase</keyword>
<proteinExistence type="inferred from homology"/>
<organism>
    <name type="scientific">Methanothermobacter marburgensis (strain ATCC BAA-927 / DSM 2133 / JCM 14651 / NBRC 100331 / OCM 82 / Marburg)</name>
    <name type="common">Methanobacterium thermoautotrophicum</name>
    <dbReference type="NCBI Taxonomy" id="79929"/>
    <lineage>
        <taxon>Archaea</taxon>
        <taxon>Methanobacteriati</taxon>
        <taxon>Methanobacteriota</taxon>
        <taxon>Methanomada group</taxon>
        <taxon>Methanobacteria</taxon>
        <taxon>Methanobacteriales</taxon>
        <taxon>Methanobacteriaceae</taxon>
        <taxon>Methanothermobacter</taxon>
    </lineage>
</organism>
<evidence type="ECO:0000255" key="1">
    <source>
        <dbReference type="HAMAP-Rule" id="MF_02115"/>
    </source>
</evidence>
<comment type="function">
    <text evidence="1">Catalyzes the transfer of the AMP portion of ATP to flavin mononucleotide (FMN) to produce flavin adenine dinucleotide (FAD) coenzyme.</text>
</comment>
<comment type="catalytic activity">
    <reaction evidence="1">
        <text>FMN + ATP + H(+) = FAD + diphosphate</text>
        <dbReference type="Rhea" id="RHEA:17237"/>
        <dbReference type="ChEBI" id="CHEBI:15378"/>
        <dbReference type="ChEBI" id="CHEBI:30616"/>
        <dbReference type="ChEBI" id="CHEBI:33019"/>
        <dbReference type="ChEBI" id="CHEBI:57692"/>
        <dbReference type="ChEBI" id="CHEBI:58210"/>
        <dbReference type="EC" id="2.7.7.2"/>
    </reaction>
</comment>
<comment type="cofactor">
    <cofactor evidence="1">
        <name>a divalent metal cation</name>
        <dbReference type="ChEBI" id="CHEBI:60240"/>
    </cofactor>
</comment>
<comment type="pathway">
    <text evidence="1">Cofactor biosynthesis; FAD biosynthesis; FAD from FMN: step 1/1.</text>
</comment>
<comment type="subunit">
    <text evidence="1">Homodimer.</text>
</comment>
<comment type="similarity">
    <text evidence="1">Belongs to the archaeal FAD synthase family.</text>
</comment>
<protein>
    <recommendedName>
        <fullName evidence="1">FAD synthase</fullName>
        <ecNumber evidence="1">2.7.7.2</ecNumber>
    </recommendedName>
    <alternativeName>
        <fullName evidence="1">FMN adenylyltransferase</fullName>
    </alternativeName>
    <alternativeName>
        <fullName evidence="1">Flavin adenine dinucleotide synthase</fullName>
    </alternativeName>
</protein>
<dbReference type="EC" id="2.7.7.2" evidence="1"/>
<dbReference type="EMBL" id="CP001710">
    <property type="protein sequence ID" value="ADL58829.1"/>
    <property type="molecule type" value="Genomic_DNA"/>
</dbReference>
<dbReference type="RefSeq" id="WP_013296051.1">
    <property type="nucleotide sequence ID" value="NC_014408.1"/>
</dbReference>
<dbReference type="SMR" id="D9PX81"/>
<dbReference type="STRING" id="79929.MTBMA_c12410"/>
<dbReference type="PaxDb" id="79929-MTBMA_c12410"/>
<dbReference type="GeneID" id="77400013"/>
<dbReference type="KEGG" id="mmg:MTBMA_c12410"/>
<dbReference type="PATRIC" id="fig|79929.8.peg.1204"/>
<dbReference type="HOGENOM" id="CLU_034585_2_1_2"/>
<dbReference type="UniPathway" id="UPA00277">
    <property type="reaction ID" value="UER00407"/>
</dbReference>
<dbReference type="Proteomes" id="UP000000345">
    <property type="component" value="Chromosome"/>
</dbReference>
<dbReference type="GO" id="GO:0005524">
    <property type="term" value="F:ATP binding"/>
    <property type="evidence" value="ECO:0007669"/>
    <property type="project" value="UniProtKB-UniRule"/>
</dbReference>
<dbReference type="GO" id="GO:0003919">
    <property type="term" value="F:FMN adenylyltransferase activity"/>
    <property type="evidence" value="ECO:0007669"/>
    <property type="project" value="UniProtKB-UniRule"/>
</dbReference>
<dbReference type="GO" id="GO:0006747">
    <property type="term" value="P:FAD biosynthetic process"/>
    <property type="evidence" value="ECO:0007669"/>
    <property type="project" value="UniProtKB-UniRule"/>
</dbReference>
<dbReference type="GO" id="GO:0046444">
    <property type="term" value="P:FMN metabolic process"/>
    <property type="evidence" value="ECO:0007669"/>
    <property type="project" value="UniProtKB-UniRule"/>
</dbReference>
<dbReference type="CDD" id="cd02170">
    <property type="entry name" value="cytidylyltransferase"/>
    <property type="match status" value="1"/>
</dbReference>
<dbReference type="Gene3D" id="3.40.50.620">
    <property type="entry name" value="HUPs"/>
    <property type="match status" value="1"/>
</dbReference>
<dbReference type="HAMAP" id="MF_02115">
    <property type="entry name" value="FAD_synth_arch"/>
    <property type="match status" value="1"/>
</dbReference>
<dbReference type="InterPro" id="IPR050385">
    <property type="entry name" value="Archaeal_FAD_synthase"/>
</dbReference>
<dbReference type="InterPro" id="IPR004821">
    <property type="entry name" value="Cyt_trans-like"/>
</dbReference>
<dbReference type="InterPro" id="IPR024902">
    <property type="entry name" value="FAD_synth_RibL"/>
</dbReference>
<dbReference type="InterPro" id="IPR014729">
    <property type="entry name" value="Rossmann-like_a/b/a_fold"/>
</dbReference>
<dbReference type="NCBIfam" id="TIGR00125">
    <property type="entry name" value="cyt_tran_rel"/>
    <property type="match status" value="1"/>
</dbReference>
<dbReference type="PANTHER" id="PTHR43793">
    <property type="entry name" value="FAD SYNTHASE"/>
    <property type="match status" value="1"/>
</dbReference>
<dbReference type="PANTHER" id="PTHR43793:SF1">
    <property type="entry name" value="FAD SYNTHASE"/>
    <property type="match status" value="1"/>
</dbReference>
<dbReference type="Pfam" id="PF01467">
    <property type="entry name" value="CTP_transf_like"/>
    <property type="match status" value="1"/>
</dbReference>
<dbReference type="SUPFAM" id="SSF52374">
    <property type="entry name" value="Nucleotidylyl transferase"/>
    <property type="match status" value="1"/>
</dbReference>
<accession>D9PX81</accession>
<sequence>MKRFSDKRTQIKTVMATGTFDIIHPGHGFFLEEAKKLGGENARLVVVLARDSTVRARKRTPIIGEKQRLEVVMMLKPVDEAYLGSETDMFEIVHRLKPDIIAIGPDQKFDIDELRDELRRRGLECEVKRVGKYRRSELDSTCKIIKKIRKMEFDEDALKNC</sequence>
<feature type="chain" id="PRO_0000406274" description="FAD synthase">
    <location>
        <begin position="1"/>
        <end position="161"/>
    </location>
</feature>
<feature type="binding site" evidence="1">
    <location>
        <begin position="19"/>
        <end position="20"/>
    </location>
    <ligand>
        <name>ATP</name>
        <dbReference type="ChEBI" id="CHEBI:30616"/>
    </ligand>
</feature>
<feature type="binding site" evidence="1">
    <location>
        <begin position="24"/>
        <end position="27"/>
    </location>
    <ligand>
        <name>ATP</name>
        <dbReference type="ChEBI" id="CHEBI:30616"/>
    </ligand>
</feature>
<feature type="binding site" evidence="1">
    <location>
        <position position="106"/>
    </location>
    <ligand>
        <name>ATP</name>
        <dbReference type="ChEBI" id="CHEBI:30616"/>
    </ligand>
</feature>
<feature type="binding site" evidence="1">
    <location>
        <position position="133"/>
    </location>
    <ligand>
        <name>ATP</name>
        <dbReference type="ChEBI" id="CHEBI:30616"/>
    </ligand>
</feature>
<reference key="1">
    <citation type="journal article" date="2010" name="J. Bacteriol.">
        <title>Complete genome sequence of Methanothermobacter marburgensis, a methanoarchaeon model organism.</title>
        <authorList>
            <person name="Liesegang H."/>
            <person name="Kaster A.K."/>
            <person name="Wiezer A."/>
            <person name="Goenrich M."/>
            <person name="Wollherr A."/>
            <person name="Seedorf H."/>
            <person name="Gottschalk G."/>
            <person name="Thauer R.K."/>
        </authorList>
    </citation>
    <scope>NUCLEOTIDE SEQUENCE [LARGE SCALE GENOMIC DNA]</scope>
    <source>
        <strain>ATCC BAA-927 / DSM 2133 / JCM 14651 / NBRC 100331 / OCM 82 / Marburg</strain>
    </source>
</reference>
<gene>
    <name evidence="1" type="primary">ribL</name>
    <name type="ordered locus">MTBMA_c12410</name>
</gene>